<proteinExistence type="inferred from homology"/>
<reference key="1">
    <citation type="journal article" date="2011" name="J. Bacteriol.">
        <title>Comparative genomics of 28 Salmonella enterica isolates: evidence for CRISPR-mediated adaptive sublineage evolution.</title>
        <authorList>
            <person name="Fricke W.F."/>
            <person name="Mammel M.K."/>
            <person name="McDermott P.F."/>
            <person name="Tartera C."/>
            <person name="White D.G."/>
            <person name="Leclerc J.E."/>
            <person name="Ravel J."/>
            <person name="Cebula T.A."/>
        </authorList>
    </citation>
    <scope>NUCLEOTIDE SEQUENCE [LARGE SCALE GENOMIC DNA]</scope>
    <source>
        <strain>SL483</strain>
    </source>
</reference>
<gene>
    <name evidence="1" type="primary">flgI</name>
    <name type="ordered locus">SeAg_B2007</name>
</gene>
<comment type="function">
    <text evidence="1">Assembles around the rod to form the L-ring and probably protects the motor/basal body from shearing forces during rotation.</text>
</comment>
<comment type="subunit">
    <text evidence="1">The basal body constitutes a major portion of the flagellar organelle and consists of four rings (L,P,S, and M) mounted on a central rod.</text>
</comment>
<comment type="subcellular location">
    <subcellularLocation>
        <location evidence="1">Periplasm</location>
    </subcellularLocation>
    <subcellularLocation>
        <location evidence="1">Bacterial flagellum basal body</location>
    </subcellularLocation>
</comment>
<comment type="similarity">
    <text evidence="1">Belongs to the FlgI family.</text>
</comment>
<accession>B5F926</accession>
<sequence>MFKALAGIVLALVATLAHAERIRDLTSVQGVRENSLIGYGLVVGLDGTGDQTTQTPFTTQTLNNMLSQLGITVPTGTNMQLKNVAAVMVTASYPPFARQGQTIDVVVSSMGNAKSLRGGTLLMTPLKGVDSQVYALAQGNILVGGAGASAGGSSVQVNQLNGGRITNGAIIERELPTQFGAGNTINLQLNDEDFTMAQQITDAINRARGYGSATALDARTVQVRVPSGNSSQVRFLADIQNMEVNVTPQDAKVVINSRTGSVVMNREVTLDSCAVAQGNLSVTVNRQLNVNQPNTPFGGGQTVVTPQTQIDLRQSGGSLQSVRSSANLNSVVRALNALGATPMDLMSILQSMQSAGCLRAKLEII</sequence>
<evidence type="ECO:0000255" key="1">
    <source>
        <dbReference type="HAMAP-Rule" id="MF_00416"/>
    </source>
</evidence>
<dbReference type="EMBL" id="CP001138">
    <property type="protein sequence ID" value="ACH49392.1"/>
    <property type="molecule type" value="Genomic_DNA"/>
</dbReference>
<dbReference type="RefSeq" id="WP_001518955.1">
    <property type="nucleotide sequence ID" value="NC_011149.1"/>
</dbReference>
<dbReference type="SMR" id="B5F926"/>
<dbReference type="KEGG" id="sea:SeAg_B2007"/>
<dbReference type="HOGENOM" id="CLU_045235_1_0_6"/>
<dbReference type="Proteomes" id="UP000008819">
    <property type="component" value="Chromosome"/>
</dbReference>
<dbReference type="GO" id="GO:0009428">
    <property type="term" value="C:bacterial-type flagellum basal body, distal rod, P ring"/>
    <property type="evidence" value="ECO:0007669"/>
    <property type="project" value="InterPro"/>
</dbReference>
<dbReference type="GO" id="GO:0030288">
    <property type="term" value="C:outer membrane-bounded periplasmic space"/>
    <property type="evidence" value="ECO:0007669"/>
    <property type="project" value="InterPro"/>
</dbReference>
<dbReference type="GO" id="GO:0005198">
    <property type="term" value="F:structural molecule activity"/>
    <property type="evidence" value="ECO:0007669"/>
    <property type="project" value="InterPro"/>
</dbReference>
<dbReference type="GO" id="GO:0071973">
    <property type="term" value="P:bacterial-type flagellum-dependent cell motility"/>
    <property type="evidence" value="ECO:0007669"/>
    <property type="project" value="InterPro"/>
</dbReference>
<dbReference type="HAMAP" id="MF_00416">
    <property type="entry name" value="FlgI"/>
    <property type="match status" value="1"/>
</dbReference>
<dbReference type="InterPro" id="IPR001782">
    <property type="entry name" value="Flag_FlgI"/>
</dbReference>
<dbReference type="NCBIfam" id="NF003676">
    <property type="entry name" value="PRK05303.1"/>
    <property type="match status" value="1"/>
</dbReference>
<dbReference type="PANTHER" id="PTHR30381">
    <property type="entry name" value="FLAGELLAR P-RING PERIPLASMIC PROTEIN FLGI"/>
    <property type="match status" value="1"/>
</dbReference>
<dbReference type="PANTHER" id="PTHR30381:SF0">
    <property type="entry name" value="FLAGELLAR P-RING PROTEIN"/>
    <property type="match status" value="1"/>
</dbReference>
<dbReference type="Pfam" id="PF02119">
    <property type="entry name" value="FlgI"/>
    <property type="match status" value="1"/>
</dbReference>
<dbReference type="PRINTS" id="PR01010">
    <property type="entry name" value="FLGPRINGFLGI"/>
</dbReference>
<name>FLGI_SALA4</name>
<feature type="signal peptide" evidence="1">
    <location>
        <begin position="1"/>
        <end position="19"/>
    </location>
</feature>
<feature type="chain" id="PRO_1000123978" description="Flagellar P-ring protein">
    <location>
        <begin position="20"/>
        <end position="365"/>
    </location>
</feature>
<keyword id="KW-0975">Bacterial flagellum</keyword>
<keyword id="KW-0574">Periplasm</keyword>
<keyword id="KW-0732">Signal</keyword>
<organism>
    <name type="scientific">Salmonella agona (strain SL483)</name>
    <dbReference type="NCBI Taxonomy" id="454166"/>
    <lineage>
        <taxon>Bacteria</taxon>
        <taxon>Pseudomonadati</taxon>
        <taxon>Pseudomonadota</taxon>
        <taxon>Gammaproteobacteria</taxon>
        <taxon>Enterobacterales</taxon>
        <taxon>Enterobacteriaceae</taxon>
        <taxon>Salmonella</taxon>
    </lineage>
</organism>
<protein>
    <recommendedName>
        <fullName evidence="1">Flagellar P-ring protein</fullName>
    </recommendedName>
    <alternativeName>
        <fullName evidence="1">Basal body P-ring protein</fullName>
    </alternativeName>
</protein>